<organism>
    <name type="scientific">Aliivibrio fischeri (strain ATCC 700601 / ES114)</name>
    <name type="common">Vibrio fischeri</name>
    <dbReference type="NCBI Taxonomy" id="312309"/>
    <lineage>
        <taxon>Bacteria</taxon>
        <taxon>Pseudomonadati</taxon>
        <taxon>Pseudomonadota</taxon>
        <taxon>Gammaproteobacteria</taxon>
        <taxon>Vibrionales</taxon>
        <taxon>Vibrionaceae</taxon>
        <taxon>Aliivibrio</taxon>
    </lineage>
</organism>
<accession>Q5E8M7</accession>
<accession>Q5E8M8</accession>
<dbReference type="EMBL" id="CP000020">
    <property type="protein sequence ID" value="AAW84619.2"/>
    <property type="molecule type" value="Genomic_DNA"/>
</dbReference>
<dbReference type="RefSeq" id="WP_005417043.1">
    <property type="nucleotide sequence ID" value="NZ_CAWLES010000001.1"/>
</dbReference>
<dbReference type="RefSeq" id="YP_203507.2">
    <property type="nucleotide sequence ID" value="NC_006840.2"/>
</dbReference>
<dbReference type="SMR" id="Q5E8M7"/>
<dbReference type="STRING" id="312309.VF_0124"/>
<dbReference type="EnsemblBacteria" id="AAW84619">
    <property type="protein sequence ID" value="AAW84619"/>
    <property type="gene ID" value="VF_0124"/>
</dbReference>
<dbReference type="GeneID" id="54162750"/>
<dbReference type="KEGG" id="vfi:VF_0124"/>
<dbReference type="PATRIC" id="fig|312309.11.peg.123"/>
<dbReference type="eggNOG" id="COG1309">
    <property type="taxonomic scope" value="Bacteria"/>
</dbReference>
<dbReference type="HOGENOM" id="CLU_069356_5_0_6"/>
<dbReference type="OrthoDB" id="9179041at2"/>
<dbReference type="Proteomes" id="UP000000537">
    <property type="component" value="Chromosome I"/>
</dbReference>
<dbReference type="GO" id="GO:0043590">
    <property type="term" value="C:bacterial nucleoid"/>
    <property type="evidence" value="ECO:0007669"/>
    <property type="project" value="UniProtKB-UniRule"/>
</dbReference>
<dbReference type="GO" id="GO:0005737">
    <property type="term" value="C:cytoplasm"/>
    <property type="evidence" value="ECO:0007669"/>
    <property type="project" value="UniProtKB-UniRule"/>
</dbReference>
<dbReference type="GO" id="GO:0003700">
    <property type="term" value="F:DNA-binding transcription factor activity"/>
    <property type="evidence" value="ECO:0007669"/>
    <property type="project" value="TreeGrafter"/>
</dbReference>
<dbReference type="GO" id="GO:0000976">
    <property type="term" value="F:transcription cis-regulatory region binding"/>
    <property type="evidence" value="ECO:0007669"/>
    <property type="project" value="TreeGrafter"/>
</dbReference>
<dbReference type="GO" id="GO:0051301">
    <property type="term" value="P:cell division"/>
    <property type="evidence" value="ECO:0007669"/>
    <property type="project" value="UniProtKB-KW"/>
</dbReference>
<dbReference type="GO" id="GO:0010974">
    <property type="term" value="P:negative regulation of division septum assembly"/>
    <property type="evidence" value="ECO:0007669"/>
    <property type="project" value="InterPro"/>
</dbReference>
<dbReference type="Gene3D" id="1.10.357.10">
    <property type="entry name" value="Tetracycline Repressor, domain 2"/>
    <property type="match status" value="1"/>
</dbReference>
<dbReference type="HAMAP" id="MF_01839">
    <property type="entry name" value="NO_factor_SlmA"/>
    <property type="match status" value="1"/>
</dbReference>
<dbReference type="InterPro" id="IPR009057">
    <property type="entry name" value="Homeodomain-like_sf"/>
</dbReference>
<dbReference type="InterPro" id="IPR050109">
    <property type="entry name" value="HTH-type_TetR-like_transc_reg"/>
</dbReference>
<dbReference type="InterPro" id="IPR001647">
    <property type="entry name" value="HTH_TetR"/>
</dbReference>
<dbReference type="InterPro" id="IPR023769">
    <property type="entry name" value="NO_SlmA"/>
</dbReference>
<dbReference type="InterPro" id="IPR054580">
    <property type="entry name" value="SlmA-like_C"/>
</dbReference>
<dbReference type="InterPro" id="IPR036271">
    <property type="entry name" value="Tet_transcr_reg_TetR-rel_C_sf"/>
</dbReference>
<dbReference type="NCBIfam" id="NF007015">
    <property type="entry name" value="PRK09480.1"/>
    <property type="match status" value="1"/>
</dbReference>
<dbReference type="PANTHER" id="PTHR30055">
    <property type="entry name" value="HTH-TYPE TRANSCRIPTIONAL REGULATOR RUTR"/>
    <property type="match status" value="1"/>
</dbReference>
<dbReference type="PANTHER" id="PTHR30055:SF183">
    <property type="entry name" value="NUCLEOID OCCLUSION FACTOR SLMA"/>
    <property type="match status" value="1"/>
</dbReference>
<dbReference type="Pfam" id="PF22276">
    <property type="entry name" value="SlmA-like_C"/>
    <property type="match status" value="1"/>
</dbReference>
<dbReference type="Pfam" id="PF00440">
    <property type="entry name" value="TetR_N"/>
    <property type="match status" value="1"/>
</dbReference>
<dbReference type="SUPFAM" id="SSF46689">
    <property type="entry name" value="Homeodomain-like"/>
    <property type="match status" value="1"/>
</dbReference>
<dbReference type="SUPFAM" id="SSF48498">
    <property type="entry name" value="Tetracyclin repressor-like, C-terminal domain"/>
    <property type="match status" value="1"/>
</dbReference>
<dbReference type="PROSITE" id="PS50977">
    <property type="entry name" value="HTH_TETR_2"/>
    <property type="match status" value="1"/>
</dbReference>
<evidence type="ECO:0000255" key="1">
    <source>
        <dbReference type="HAMAP-Rule" id="MF_01839"/>
    </source>
</evidence>
<reference key="1">
    <citation type="journal article" date="2005" name="Proc. Natl. Acad. Sci. U.S.A.">
        <title>Complete genome sequence of Vibrio fischeri: a symbiotic bacterium with pathogenic congeners.</title>
        <authorList>
            <person name="Ruby E.G."/>
            <person name="Urbanowski M."/>
            <person name="Campbell J."/>
            <person name="Dunn A."/>
            <person name="Faini M."/>
            <person name="Gunsalus R."/>
            <person name="Lostroh P."/>
            <person name="Lupp C."/>
            <person name="McCann J."/>
            <person name="Millikan D."/>
            <person name="Schaefer A."/>
            <person name="Stabb E."/>
            <person name="Stevens A."/>
            <person name="Visick K."/>
            <person name="Whistler C."/>
            <person name="Greenberg E.P."/>
        </authorList>
    </citation>
    <scope>NUCLEOTIDE SEQUENCE [LARGE SCALE GENOMIC DNA]</scope>
    <source>
        <strain>ATCC 700601 / ES114</strain>
    </source>
</reference>
<reference key="2">
    <citation type="journal article" date="2008" name="BMC Genomics">
        <title>Comparative genomics-based investigation of resequencing targets in Vibrio fischeri: focus on point miscalls and artefactual expansions.</title>
        <authorList>
            <person name="Mandel M.J."/>
            <person name="Stabb E.V."/>
            <person name="Ruby E.G."/>
        </authorList>
    </citation>
    <scope>SEQUENCE REVISION</scope>
</reference>
<sequence>MATPRKPNRRDEILQALAEMLESNEGAARITTAKLAKQVGVSEAALYRHFPSKAKMFEGLIEFIEESIFSRVNRILEDEKDTLKRIELLLKLLLAFAERNPGLTRIMTGHALMFENERLRSRINQIFERIELQFKQILRERKLREGKAFPIDESILAAQLVGQVEGSFCRFVRSDFKYQPTENFNEYWALLSAQIQ</sequence>
<comment type="function">
    <text evidence="1">Required for nucleoid occlusion (NO) phenomenon, which prevents Z-ring formation and cell division over the nucleoid. Acts as a DNA-associated cell division inhibitor that binds simultaneously chromosomal DNA and FtsZ, and disrupts the assembly of FtsZ polymers. SlmA-DNA-binding sequences (SBS) are dispersed on non-Ter regions of the chromosome, preventing FtsZ polymerization at these regions.</text>
</comment>
<comment type="subunit">
    <text evidence="1">Homodimer. Interacts with FtsZ.</text>
</comment>
<comment type="subcellular location">
    <subcellularLocation>
        <location evidence="1">Cytoplasm</location>
        <location evidence="1">Nucleoid</location>
    </subcellularLocation>
</comment>
<comment type="similarity">
    <text evidence="1">Belongs to the nucleoid occlusion factor SlmA family.</text>
</comment>
<gene>
    <name evidence="1" type="primary">slmA</name>
    <name type="ordered locus">VF_0124</name>
    <name type="ORF">VF0123</name>
</gene>
<feature type="chain" id="PRO_0000198984" description="Nucleoid occlusion factor SlmA">
    <location>
        <begin position="1"/>
        <end position="196"/>
    </location>
</feature>
<feature type="domain" description="HTH tetR-type" evidence="1">
    <location>
        <begin position="7"/>
        <end position="68"/>
    </location>
</feature>
<feature type="DNA-binding region" description="H-T-H motif" evidence="1">
    <location>
        <begin position="31"/>
        <end position="50"/>
    </location>
</feature>
<feature type="coiled-coil region" evidence="1">
    <location>
        <begin position="71"/>
        <end position="93"/>
    </location>
</feature>
<keyword id="KW-0131">Cell cycle</keyword>
<keyword id="KW-0132">Cell division</keyword>
<keyword id="KW-0175">Coiled coil</keyword>
<keyword id="KW-0963">Cytoplasm</keyword>
<keyword id="KW-0238">DNA-binding</keyword>
<keyword id="KW-1185">Reference proteome</keyword>
<name>SLMA_ALIF1</name>
<protein>
    <recommendedName>
        <fullName evidence="1">Nucleoid occlusion factor SlmA</fullName>
    </recommendedName>
</protein>
<proteinExistence type="inferred from homology"/>